<organism>
    <name type="scientific">Human cytomegalovirus (strain Merlin)</name>
    <name type="common">HHV-5</name>
    <name type="synonym">Human herpesvirus 5</name>
    <dbReference type="NCBI Taxonomy" id="295027"/>
    <lineage>
        <taxon>Viruses</taxon>
        <taxon>Duplodnaviria</taxon>
        <taxon>Heunggongvirae</taxon>
        <taxon>Peploviricota</taxon>
        <taxon>Herviviricetes</taxon>
        <taxon>Herpesvirales</taxon>
        <taxon>Orthoherpesviridae</taxon>
        <taxon>Betaherpesvirinae</taxon>
        <taxon>Cytomegalovirus</taxon>
        <taxon>Cytomegalovirus humanbeta5</taxon>
        <taxon>Human cytomegalovirus</taxon>
    </lineage>
</organism>
<reference key="1">
    <citation type="journal article" date="2004" name="J. Gen. Virol.">
        <title>Genetic content of wild-type human cytomegalovirus.</title>
        <authorList>
            <person name="Dolan A."/>
            <person name="Cunningham C."/>
            <person name="Hector R.D."/>
            <person name="Hassan-Walker A.F."/>
            <person name="Lee L."/>
            <person name="Addison C."/>
            <person name="Dargan D.J."/>
            <person name="McGeoch D.J."/>
            <person name="Gatherer D."/>
            <person name="Emery V.C."/>
            <person name="Griffiths P.D."/>
            <person name="Sinzger C."/>
            <person name="McSharry B.P."/>
            <person name="Wilkinson G.W.G."/>
            <person name="Davison A.J."/>
        </authorList>
    </citation>
    <scope>NUCLEOTIDE SEQUENCE [LARGE SCALE GENOMIC DNA]</scope>
</reference>
<proteinExistence type="inferred from homology"/>
<dbReference type="EMBL" id="AY446894">
    <property type="protein sequence ID" value="AAR31699.1"/>
    <property type="molecule type" value="Genomic_DNA"/>
</dbReference>
<dbReference type="RefSeq" id="YP_081595.1">
    <property type="nucleotide sequence ID" value="NC_006273.2"/>
</dbReference>
<dbReference type="GlyCosmos" id="F5HFJ7">
    <property type="glycosylation" value="2 sites, No reported glycans"/>
</dbReference>
<dbReference type="DNASU" id="3077551"/>
<dbReference type="GeneID" id="3077551"/>
<dbReference type="KEGG" id="vg:3077551"/>
<dbReference type="Reactome" id="R-HSA-9609690">
    <property type="pathway name" value="HCMV Early Events"/>
</dbReference>
<dbReference type="Proteomes" id="UP000000938">
    <property type="component" value="Segment"/>
</dbReference>
<dbReference type="GO" id="GO:0044167">
    <property type="term" value="C:host cell endoplasmic reticulum membrane"/>
    <property type="evidence" value="ECO:0007669"/>
    <property type="project" value="UniProtKB-SubCell"/>
</dbReference>
<dbReference type="GO" id="GO:0016020">
    <property type="term" value="C:membrane"/>
    <property type="evidence" value="ECO:0007669"/>
    <property type="project" value="UniProtKB-KW"/>
</dbReference>
<dbReference type="InterPro" id="IPR035128">
    <property type="entry name" value="US10"/>
</dbReference>
<dbReference type="Pfam" id="PF17617">
    <property type="entry name" value="US10"/>
    <property type="match status" value="1"/>
</dbReference>
<sequence length="185" mass="20771">MLRRGSLRNPLAICLLWWLGVVAAATEETREPTYFTCGCVIQNHVLKGAVKLYGQFPSPKTLRASAWLHDGENHERHRQPILVEGTATATEALYILLPTELSSPEGNRPRNYSATLTLASRDCYERFVCPVYDSGTPMGVLMNLTYLWYLGDYGAILKIYFGLFCGACVITRSLLLICGYYPPRE</sequence>
<feature type="signal peptide" evidence="2">
    <location>
        <begin position="1"/>
        <end position="24"/>
    </location>
</feature>
<feature type="chain" id="PRO_0000418251" description="Membrane glycoprotein US10">
    <location>
        <begin position="25"/>
        <end position="185"/>
    </location>
</feature>
<feature type="topological domain" description="Lumenal" evidence="2">
    <location>
        <begin position="25"/>
        <end position="149"/>
    </location>
</feature>
<feature type="transmembrane region" description="Helical" evidence="2">
    <location>
        <begin position="150"/>
        <end position="170"/>
    </location>
</feature>
<feature type="topological domain" description="Cytoplasmic" evidence="2">
    <location>
        <begin position="171"/>
        <end position="185"/>
    </location>
</feature>
<feature type="domain" description="Ig-like H-type">
    <location>
        <begin position="30"/>
        <end position="133"/>
    </location>
</feature>
<feature type="glycosylation site" description="N-linked (GlcNAc...) asparagine; by host" evidence="2">
    <location>
        <position position="111"/>
    </location>
</feature>
<feature type="glycosylation site" description="N-linked (GlcNAc...) asparagine; by host" evidence="2">
    <location>
        <position position="143"/>
    </location>
</feature>
<feature type="disulfide bond" evidence="1">
    <location>
        <begin position="39"/>
        <end position="129"/>
    </location>
</feature>
<comment type="function">
    <text>Plays a role in the modulation of host immune response by down-regulating the surface presentation of HLA-G molecules. Selectively targets HLA-G molecules for degradation by a mechanism distinct from the one used by US11.</text>
</comment>
<comment type="subcellular location">
    <subcellularLocation>
        <location evidence="3">Host endoplasmic reticulum membrane</location>
        <topology evidence="3">Single-pass type I membrane protein</topology>
    </subcellularLocation>
</comment>
<comment type="similarity">
    <text evidence="3">Belongs to the HHV-5 US6 protein family.</text>
</comment>
<organismHost>
    <name type="scientific">Homo sapiens</name>
    <name type="common">Human</name>
    <dbReference type="NCBI Taxonomy" id="9606"/>
</organismHost>
<gene>
    <name type="primary">US10</name>
</gene>
<accession>F5HFJ7</accession>
<name>US10_HCMVM</name>
<protein>
    <recommendedName>
        <fullName>Membrane glycoprotein US10</fullName>
    </recommendedName>
</protein>
<keyword id="KW-1015">Disulfide bond</keyword>
<keyword id="KW-0325">Glycoprotein</keyword>
<keyword id="KW-1038">Host endoplasmic reticulum</keyword>
<keyword id="KW-1043">Host membrane</keyword>
<keyword id="KW-0945">Host-virus interaction</keyword>
<keyword id="KW-0393">Immunoglobulin domain</keyword>
<keyword id="KW-0472">Membrane</keyword>
<keyword id="KW-1185">Reference proteome</keyword>
<keyword id="KW-0732">Signal</keyword>
<keyword id="KW-0812">Transmembrane</keyword>
<keyword id="KW-1133">Transmembrane helix</keyword>
<keyword id="KW-0899">Viral immunoevasion</keyword>
<evidence type="ECO:0000250" key="1"/>
<evidence type="ECO:0000255" key="2"/>
<evidence type="ECO:0000305" key="3"/>